<keyword id="KW-1015">Disulfide bond</keyword>
<keyword id="KW-0960">Knottin</keyword>
<keyword id="KW-0964">Secreted</keyword>
<keyword id="KW-0732">Signal</keyword>
<keyword id="KW-0800">Toxin</keyword>
<evidence type="ECO:0000250" key="1"/>
<evidence type="ECO:0000255" key="2"/>
<evidence type="ECO:0000305" key="3"/>
<feature type="signal peptide" evidence="2">
    <location>
        <begin position="1"/>
        <end position="20"/>
    </location>
</feature>
<feature type="propeptide" id="PRO_0000401521" evidence="1">
    <location>
        <begin position="21"/>
        <end position="41"/>
    </location>
</feature>
<feature type="chain" id="PRO_0000401522" description="U1-lycotoxin-Ls1b">
    <location>
        <begin position="42"/>
        <end position="107"/>
    </location>
</feature>
<feature type="disulfide bond" evidence="1">
    <location>
        <begin position="44"/>
        <end position="59"/>
    </location>
</feature>
<feature type="disulfide bond" evidence="1">
    <location>
        <begin position="51"/>
        <end position="68"/>
    </location>
</feature>
<feature type="disulfide bond" evidence="1">
    <location>
        <begin position="58"/>
        <end position="86"/>
    </location>
</feature>
<feature type="disulfide bond" evidence="1">
    <location>
        <begin position="70"/>
        <end position="84"/>
    </location>
</feature>
<accession>B6DCK1</accession>
<proteinExistence type="evidence at transcript level"/>
<protein>
    <recommendedName>
        <fullName>U1-lycotoxin-Ls1b</fullName>
    </recommendedName>
    <alternativeName>
        <fullName>Toxin-like structure LSTX-A12</fullName>
    </alternativeName>
</protein>
<name>TX112_LYCSI</name>
<sequence>MMKVLVVVALLPTLISYSSSEGIDDLEADELLSLMANEQTRKECIPKHHECTSNKHGCCRGNFFKYKCQCTTVVTQDGEQTERCFCGTPPHHKAAELVVGFGKKIFG</sequence>
<dbReference type="EMBL" id="EU925935">
    <property type="protein sequence ID" value="ACI41267.1"/>
    <property type="molecule type" value="mRNA"/>
</dbReference>
<dbReference type="EMBL" id="FM863939">
    <property type="protein sequence ID" value="CAS03537.1"/>
    <property type="molecule type" value="mRNA"/>
</dbReference>
<dbReference type="SMR" id="B6DCK1"/>
<dbReference type="ArachnoServer" id="AS000884">
    <property type="toxin name" value="U1-lycotoxin-Ls1b"/>
</dbReference>
<dbReference type="GO" id="GO:0005576">
    <property type="term" value="C:extracellular region"/>
    <property type="evidence" value="ECO:0007669"/>
    <property type="project" value="UniProtKB-SubCell"/>
</dbReference>
<dbReference type="GO" id="GO:0090729">
    <property type="term" value="F:toxin activity"/>
    <property type="evidence" value="ECO:0007669"/>
    <property type="project" value="UniProtKB-KW"/>
</dbReference>
<dbReference type="InterPro" id="IPR019553">
    <property type="entry name" value="Spider_toxin_CSTX_knottin"/>
</dbReference>
<dbReference type="InterPro" id="IPR011142">
    <property type="entry name" value="Spider_toxin_CSTX_Knottin_CS"/>
</dbReference>
<dbReference type="Pfam" id="PF10530">
    <property type="entry name" value="Toxin_35"/>
    <property type="match status" value="1"/>
</dbReference>
<dbReference type="PROSITE" id="PS60029">
    <property type="entry name" value="SPIDER_CSTX"/>
    <property type="match status" value="1"/>
</dbReference>
<comment type="subcellular location">
    <subcellularLocation>
        <location evidence="1">Secreted</location>
    </subcellularLocation>
</comment>
<comment type="tissue specificity">
    <text>Expressed by the venom gland.</text>
</comment>
<comment type="domain">
    <text evidence="1">The presence of a 'disulfide through disulfide knot' structurally defines this protein as a knottin.</text>
</comment>
<comment type="similarity">
    <text evidence="3">Belongs to the neurotoxin 19 (CSTX) family. 04 (U1-Lctx) subfamily.</text>
</comment>
<reference key="1">
    <citation type="journal article" date="2010" name="Zoology">
        <title>Transcriptome analysis of the venom glands of the Chinese wolf spider Lycosa singoriensis.</title>
        <authorList>
            <person name="Zhang Y."/>
            <person name="Chen J."/>
            <person name="Tang X."/>
            <person name="Wang F."/>
            <person name="Jiang L."/>
            <person name="Xiong X."/>
            <person name="Wang M."/>
            <person name="Rong M."/>
            <person name="Liu Z."/>
            <person name="Liang S."/>
        </authorList>
    </citation>
    <scope>NUCLEOTIDE SEQUENCE [LARGE SCALE MRNA]</scope>
    <source>
        <tissue>Venom gland</tissue>
    </source>
</reference>
<organism>
    <name type="scientific">Lycosa singoriensis</name>
    <name type="common">Wolf spider</name>
    <name type="synonym">Aranea singoriensis</name>
    <dbReference type="NCBI Taxonomy" id="434756"/>
    <lineage>
        <taxon>Eukaryota</taxon>
        <taxon>Metazoa</taxon>
        <taxon>Ecdysozoa</taxon>
        <taxon>Arthropoda</taxon>
        <taxon>Chelicerata</taxon>
        <taxon>Arachnida</taxon>
        <taxon>Araneae</taxon>
        <taxon>Araneomorphae</taxon>
        <taxon>Entelegynae</taxon>
        <taxon>Lycosoidea</taxon>
        <taxon>Lycosidae</taxon>
        <taxon>Lycosa</taxon>
    </lineage>
</organism>